<comment type="function">
    <text evidence="1">SbcCD cleaves DNA hairpin structures. These structures can inhibit DNA replication and are intermediates in certain DNA recombination reactions. The complex acts as a 3'-&gt;5' double strand exonuclease that can open hairpins. It also has a 5' single-strand endonuclease activity (By similarity).</text>
</comment>
<comment type="subunit">
    <text evidence="1">Heterodimer of SbcC and SbcD.</text>
</comment>
<comment type="similarity">
    <text evidence="3">Belongs to the SMC family. SbcC subfamily.</text>
</comment>
<evidence type="ECO:0000250" key="1"/>
<evidence type="ECO:0000255" key="2"/>
<evidence type="ECO:0000305" key="3"/>
<gene>
    <name type="primary">sbcC</name>
    <name type="ordered locus">SSP1411</name>
</gene>
<keyword id="KW-0067">ATP-binding</keyword>
<keyword id="KW-0175">Coiled coil</keyword>
<keyword id="KW-0233">DNA recombination</keyword>
<keyword id="KW-0235">DNA replication</keyword>
<keyword id="KW-0255">Endonuclease</keyword>
<keyword id="KW-0269">Exonuclease</keyword>
<keyword id="KW-0378">Hydrolase</keyword>
<keyword id="KW-0540">Nuclease</keyword>
<keyword id="KW-0547">Nucleotide-binding</keyword>
<keyword id="KW-1185">Reference proteome</keyword>
<proteinExistence type="inferred from homology"/>
<dbReference type="EMBL" id="AP008934">
    <property type="protein sequence ID" value="BAE18556.1"/>
    <property type="molecule type" value="Genomic_DNA"/>
</dbReference>
<dbReference type="RefSeq" id="WP_011303183.1">
    <property type="nucleotide sequence ID" value="NC_007350.1"/>
</dbReference>
<dbReference type="SMR" id="Q49XE1"/>
<dbReference type="GeneID" id="3615350"/>
<dbReference type="KEGG" id="ssp:SSP1411"/>
<dbReference type="PATRIC" id="fig|342451.11.peg.1414"/>
<dbReference type="eggNOG" id="COG0419">
    <property type="taxonomic scope" value="Bacteria"/>
</dbReference>
<dbReference type="HOGENOM" id="CLU_004785_2_1_9"/>
<dbReference type="OrthoDB" id="9795626at2"/>
<dbReference type="Proteomes" id="UP000006371">
    <property type="component" value="Chromosome"/>
</dbReference>
<dbReference type="GO" id="GO:0005524">
    <property type="term" value="F:ATP binding"/>
    <property type="evidence" value="ECO:0007669"/>
    <property type="project" value="UniProtKB-KW"/>
</dbReference>
<dbReference type="GO" id="GO:0016887">
    <property type="term" value="F:ATP hydrolysis activity"/>
    <property type="evidence" value="ECO:0007669"/>
    <property type="project" value="InterPro"/>
</dbReference>
<dbReference type="GO" id="GO:0004519">
    <property type="term" value="F:endonuclease activity"/>
    <property type="evidence" value="ECO:0007669"/>
    <property type="project" value="UniProtKB-KW"/>
</dbReference>
<dbReference type="GO" id="GO:0004527">
    <property type="term" value="F:exonuclease activity"/>
    <property type="evidence" value="ECO:0007669"/>
    <property type="project" value="UniProtKB-KW"/>
</dbReference>
<dbReference type="GO" id="GO:0006310">
    <property type="term" value="P:DNA recombination"/>
    <property type="evidence" value="ECO:0007669"/>
    <property type="project" value="UniProtKB-KW"/>
</dbReference>
<dbReference type="GO" id="GO:0006260">
    <property type="term" value="P:DNA replication"/>
    <property type="evidence" value="ECO:0007669"/>
    <property type="project" value="UniProtKB-KW"/>
</dbReference>
<dbReference type="GO" id="GO:0006302">
    <property type="term" value="P:double-strand break repair"/>
    <property type="evidence" value="ECO:0007669"/>
    <property type="project" value="InterPro"/>
</dbReference>
<dbReference type="Gene3D" id="1.10.287.1490">
    <property type="match status" value="1"/>
</dbReference>
<dbReference type="Gene3D" id="3.40.50.300">
    <property type="entry name" value="P-loop containing nucleotide triphosphate hydrolases"/>
    <property type="match status" value="2"/>
</dbReference>
<dbReference type="InterPro" id="IPR027417">
    <property type="entry name" value="P-loop_NTPase"/>
</dbReference>
<dbReference type="InterPro" id="IPR038729">
    <property type="entry name" value="Rad50/SbcC_AAA"/>
</dbReference>
<dbReference type="InterPro" id="IPR053380">
    <property type="entry name" value="SbcCD_Nuclease_C"/>
</dbReference>
<dbReference type="NCBIfam" id="NF041751">
    <property type="entry name" value="sbcc_Staph"/>
    <property type="match status" value="1"/>
</dbReference>
<dbReference type="PANTHER" id="PTHR32114">
    <property type="entry name" value="ABC TRANSPORTER ABCH.3"/>
    <property type="match status" value="1"/>
</dbReference>
<dbReference type="PANTHER" id="PTHR32114:SF2">
    <property type="entry name" value="ABC TRANSPORTER ABCH.3"/>
    <property type="match status" value="1"/>
</dbReference>
<dbReference type="Pfam" id="PF13476">
    <property type="entry name" value="AAA_23"/>
    <property type="match status" value="1"/>
</dbReference>
<dbReference type="Pfam" id="PF13558">
    <property type="entry name" value="SbcC_Walker_B"/>
    <property type="match status" value="1"/>
</dbReference>
<dbReference type="SUPFAM" id="SSF52540">
    <property type="entry name" value="P-loop containing nucleoside triphosphate hydrolases"/>
    <property type="match status" value="1"/>
</dbReference>
<dbReference type="SUPFAM" id="SSF75712">
    <property type="entry name" value="Rad50 coiled-coil Zn hook"/>
    <property type="match status" value="1"/>
</dbReference>
<organism>
    <name type="scientific">Staphylococcus saprophyticus subsp. saprophyticus (strain ATCC 15305 / DSM 20229 / NCIMB 8711 / NCTC 7292 / S-41)</name>
    <dbReference type="NCBI Taxonomy" id="342451"/>
    <lineage>
        <taxon>Bacteria</taxon>
        <taxon>Bacillati</taxon>
        <taxon>Bacillota</taxon>
        <taxon>Bacilli</taxon>
        <taxon>Bacillales</taxon>
        <taxon>Staphylococcaceae</taxon>
        <taxon>Staphylococcus</taxon>
    </lineage>
</organism>
<name>SBCC_STAS1</name>
<reference key="1">
    <citation type="journal article" date="2005" name="Proc. Natl. Acad. Sci. U.S.A.">
        <title>Whole genome sequence of Staphylococcus saprophyticus reveals the pathogenesis of uncomplicated urinary tract infection.</title>
        <authorList>
            <person name="Kuroda M."/>
            <person name="Yamashita A."/>
            <person name="Hirakawa H."/>
            <person name="Kumano M."/>
            <person name="Morikawa K."/>
            <person name="Higashide M."/>
            <person name="Maruyama A."/>
            <person name="Inose Y."/>
            <person name="Matoba K."/>
            <person name="Toh H."/>
            <person name="Kuhara S."/>
            <person name="Hattori M."/>
            <person name="Ohta T."/>
        </authorList>
    </citation>
    <scope>NUCLEOTIDE SEQUENCE [LARGE SCALE GENOMIC DNA]</scope>
    <source>
        <strain>ATCC 15305 / DSM 20229 / NCIMB 8711 / NCTC 7292 / S-41</strain>
    </source>
</reference>
<protein>
    <recommendedName>
        <fullName>Nuclease SbcCD subunit C</fullName>
    </recommendedName>
</protein>
<feature type="chain" id="PRO_0000338477" description="Nuclease SbcCD subunit C">
    <location>
        <begin position="1"/>
        <end position="1009"/>
    </location>
</feature>
<feature type="coiled-coil region" evidence="2">
    <location>
        <begin position="178"/>
        <end position="214"/>
    </location>
</feature>
<feature type="coiled-coil region" evidence="2">
    <location>
        <begin position="243"/>
        <end position="309"/>
    </location>
</feature>
<feature type="coiled-coil region" evidence="2">
    <location>
        <begin position="337"/>
        <end position="503"/>
    </location>
</feature>
<feature type="coiled-coil region" evidence="2">
    <location>
        <begin position="578"/>
        <end position="842"/>
    </location>
</feature>
<feature type="binding site" evidence="2">
    <location>
        <begin position="34"/>
        <end position="41"/>
    </location>
    <ligand>
        <name>ATP</name>
        <dbReference type="ChEBI" id="CHEBI:30616"/>
    </ligand>
</feature>
<sequence>MRPIKLNLTNFGPFLNETIDFNNVENNQLFLISGKTGSGKTMIFDAIVFALFGEASTKDRKESDLRSHFAESKKPMVVEFEFKLRNQYFKIQRQGAFIKEGNKNKTLGQLAVYQYEQDDYALRESKINSGNQFIKALLGVNAEQFRQLFILPQGEFKRFLLSKSVEKQDILRTLFNSQRFEEIQKKLSDDVKEVREQIEKRYNDLENHWKELETFDDETLCEHKVISARQTNNIIKVLPDFKMKAQIIRDDFEQKKEILKNKVNSTENALNNNIKLEDALNKLNENQQKYEALLVNENEIQEKVKRVTEINEVRPITNLLEVKENTISKKGKVAQSIEEKSKSIFDLEDKIKQSNLEADNLKEKQDDIEELRRFIEQTQLFFEKANKYKDAYNNYQFTKTAFTDLEAHLTQKNEEIKDTTAKLNQRQPDYRKIEQITEAIYNLNNDIKQLKQNEKDKIEYDALEKRKMQKQRNLKDLSQKRVQLNEEYNNIDKSKLDLNNKQDVIATVQAALHTGETCPICGNEIHTLSSHVDFDEIMERHQQLTLLEEKIATVKGDIIKCESELSHIEEQLSKYTIASLENINYEALEDEVEKKYQEKKKIDEENNEIEKLKDQLQQYEKSSHDLQMNIQKKEHILKENETAINDFENTTGYKRVDEFLTKFEDAYNQIRQFDQTLNEIEQKIQNYKSTLAIEKNSVTYLKNNLAEIETEINETDMKINEEMQRIGFTSIEQVEKVTAQASEKQNLEKEIETFKKEKQSYELYIAQLKAETNNKKLDDTQQLKERFEEMQQVYETASTELSQHDYKMEFNSKKITEINKIIDELNSELQSQQEVFQLAEILAGKNEQKLTLENYVLIYYLERILTQANQRLAIMTGQRYQLTRRAQISQGYSGLEIDVFDAHSNQSRHITSLSGGETFQASLALALGLSEIVQQESGGISLDSMFVDEGFGTLDQETLETALDTLLSLKSTGRMVGIISHVSELKQRIPLILEVTTEQYQSTTHFKKQ</sequence>
<accession>Q49XE1</accession>